<dbReference type="EC" id="2.1.1.-" evidence="1"/>
<dbReference type="EC" id="2.1.1.35" evidence="1"/>
<dbReference type="EMBL" id="CP000668">
    <property type="protein sequence ID" value="ABP41873.1"/>
    <property type="molecule type" value="Genomic_DNA"/>
</dbReference>
<dbReference type="RefSeq" id="WP_002209474.1">
    <property type="nucleotide sequence ID" value="NZ_CP009715.1"/>
</dbReference>
<dbReference type="SMR" id="A4TRG1"/>
<dbReference type="GeneID" id="57974789"/>
<dbReference type="KEGG" id="ypp:YPDSF_3523"/>
<dbReference type="PATRIC" id="fig|386656.14.peg.178"/>
<dbReference type="GO" id="GO:0005829">
    <property type="term" value="C:cytosol"/>
    <property type="evidence" value="ECO:0007669"/>
    <property type="project" value="TreeGrafter"/>
</dbReference>
<dbReference type="GO" id="GO:0019843">
    <property type="term" value="F:rRNA binding"/>
    <property type="evidence" value="ECO:0007669"/>
    <property type="project" value="TreeGrafter"/>
</dbReference>
<dbReference type="GO" id="GO:0030697">
    <property type="term" value="F:tRNA (uracil(54)-C5)-methyltransferase activity, S-adenosyl methionine-dependent"/>
    <property type="evidence" value="ECO:0007669"/>
    <property type="project" value="UniProtKB-UniRule"/>
</dbReference>
<dbReference type="GO" id="GO:0000049">
    <property type="term" value="F:tRNA binding"/>
    <property type="evidence" value="ECO:0007669"/>
    <property type="project" value="TreeGrafter"/>
</dbReference>
<dbReference type="GO" id="GO:0030488">
    <property type="term" value="P:tRNA methylation"/>
    <property type="evidence" value="ECO:0007669"/>
    <property type="project" value="UniProtKB-UniRule"/>
</dbReference>
<dbReference type="CDD" id="cd02440">
    <property type="entry name" value="AdoMet_MTases"/>
    <property type="match status" value="1"/>
</dbReference>
<dbReference type="FunFam" id="2.40.50.1070:FF:000001">
    <property type="entry name" value="tRNA/tmRNA (uracil-C(5))-methyltransferase"/>
    <property type="match status" value="1"/>
</dbReference>
<dbReference type="FunFam" id="3.40.50.150:FF:000012">
    <property type="entry name" value="tRNA/tmRNA (uracil-C(5))-methyltransferase"/>
    <property type="match status" value="1"/>
</dbReference>
<dbReference type="Gene3D" id="2.40.50.1070">
    <property type="match status" value="1"/>
</dbReference>
<dbReference type="Gene3D" id="3.40.50.150">
    <property type="entry name" value="Vaccinia Virus protein VP39"/>
    <property type="match status" value="1"/>
</dbReference>
<dbReference type="HAMAP" id="MF_01011">
    <property type="entry name" value="RNA_methyltr_TrmA"/>
    <property type="match status" value="1"/>
</dbReference>
<dbReference type="InterPro" id="IPR030390">
    <property type="entry name" value="MeTrfase_TrmA_AS"/>
</dbReference>
<dbReference type="InterPro" id="IPR030391">
    <property type="entry name" value="MeTrfase_TrmA_CS"/>
</dbReference>
<dbReference type="InterPro" id="IPR029063">
    <property type="entry name" value="SAM-dependent_MTases_sf"/>
</dbReference>
<dbReference type="InterPro" id="IPR011869">
    <property type="entry name" value="TrmA_MeTrfase"/>
</dbReference>
<dbReference type="InterPro" id="IPR010280">
    <property type="entry name" value="U5_MeTrfase_fam"/>
</dbReference>
<dbReference type="NCBIfam" id="TIGR02143">
    <property type="entry name" value="trmA_only"/>
    <property type="match status" value="1"/>
</dbReference>
<dbReference type="PANTHER" id="PTHR47790">
    <property type="entry name" value="TRNA/TMRNA (URACIL-C(5))-METHYLTRANSFERASE"/>
    <property type="match status" value="1"/>
</dbReference>
<dbReference type="PANTHER" id="PTHR47790:SF2">
    <property type="entry name" value="TRNA_TMRNA (URACIL-C(5))-METHYLTRANSFERASE"/>
    <property type="match status" value="1"/>
</dbReference>
<dbReference type="Pfam" id="PF05958">
    <property type="entry name" value="tRNA_U5-meth_tr"/>
    <property type="match status" value="1"/>
</dbReference>
<dbReference type="SUPFAM" id="SSF53335">
    <property type="entry name" value="S-adenosyl-L-methionine-dependent methyltransferases"/>
    <property type="match status" value="1"/>
</dbReference>
<dbReference type="PROSITE" id="PS51687">
    <property type="entry name" value="SAM_MT_RNA_M5U"/>
    <property type="match status" value="1"/>
</dbReference>
<dbReference type="PROSITE" id="PS01230">
    <property type="entry name" value="TRMA_1"/>
    <property type="match status" value="1"/>
</dbReference>
<dbReference type="PROSITE" id="PS01231">
    <property type="entry name" value="TRMA_2"/>
    <property type="match status" value="1"/>
</dbReference>
<sequence length="367" mass="42413">MTPNILPIESYDHQLAEKSARLKAMMLPFQAPEPEIFRSPADHYRMRAEFRVWHDEDDLYHIMFDQQTKQRIRVEQFPVASRLINRLMDALMTAIRAEPLLRRKLFQIDYLSTLSGKLIASLLYHRQLDEEWQQKALELRDQLRAQGFDLQLIGRAAKTKIMLDHDYIDEVLPVAGREMIYRQVENSFTQPNAAVNIHMLEWALDVTQGATGDLLELYCGNGNFSLALARNFERVLATEIAKPSVAAAQYNIAANNIDNVQIIRMSAEEFTQAMQGVREFNRLKGIDLGSYNCETIFVDPPRSGLDHETVKLVQAYPRILYISCNPETLCANLEQLQHTHKISRLALFDQFPYTHHMECGVLLEKRH</sequence>
<protein>
    <recommendedName>
        <fullName evidence="1">tRNA/tmRNA (uracil-C(5))-methyltransferase</fullName>
        <ecNumber evidence="1">2.1.1.-</ecNumber>
        <ecNumber evidence="1">2.1.1.35</ecNumber>
    </recommendedName>
    <alternativeName>
        <fullName evidence="1">tRNA (uracil(54)-C(5))-methyltransferase</fullName>
    </alternativeName>
    <alternativeName>
        <fullName evidence="1">tRNA(m5U54)-methyltransferase</fullName>
        <shortName evidence="1">RUMT</shortName>
    </alternativeName>
    <alternativeName>
        <fullName evidence="1">tmRNA (uracil(341)-C(5))-methyltransferase</fullName>
    </alternativeName>
</protein>
<organism>
    <name type="scientific">Yersinia pestis (strain Pestoides F)</name>
    <dbReference type="NCBI Taxonomy" id="386656"/>
    <lineage>
        <taxon>Bacteria</taxon>
        <taxon>Pseudomonadati</taxon>
        <taxon>Pseudomonadota</taxon>
        <taxon>Gammaproteobacteria</taxon>
        <taxon>Enterobacterales</taxon>
        <taxon>Yersiniaceae</taxon>
        <taxon>Yersinia</taxon>
    </lineage>
</organism>
<keyword id="KW-0489">Methyltransferase</keyword>
<keyword id="KW-0949">S-adenosyl-L-methionine</keyword>
<keyword id="KW-0808">Transferase</keyword>
<keyword id="KW-0819">tRNA processing</keyword>
<name>TRMA_YERPP</name>
<proteinExistence type="inferred from homology"/>
<accession>A4TRG1</accession>
<comment type="function">
    <text evidence="1">Dual-specificity methyltransferase that catalyzes the formation of 5-methyluridine at position 54 (m5U54) in all tRNAs, and that of position 341 (m5U341) in tmRNA (transfer-mRNA).</text>
</comment>
<comment type="catalytic activity">
    <reaction evidence="1">
        <text>uridine(54) in tRNA + S-adenosyl-L-methionine = 5-methyluridine(54) in tRNA + S-adenosyl-L-homocysteine + H(+)</text>
        <dbReference type="Rhea" id="RHEA:42712"/>
        <dbReference type="Rhea" id="RHEA-COMP:10167"/>
        <dbReference type="Rhea" id="RHEA-COMP:10193"/>
        <dbReference type="ChEBI" id="CHEBI:15378"/>
        <dbReference type="ChEBI" id="CHEBI:57856"/>
        <dbReference type="ChEBI" id="CHEBI:59789"/>
        <dbReference type="ChEBI" id="CHEBI:65315"/>
        <dbReference type="ChEBI" id="CHEBI:74447"/>
        <dbReference type="EC" id="2.1.1.35"/>
    </reaction>
</comment>
<comment type="catalytic activity">
    <reaction evidence="1">
        <text>uridine(341) in tmRNA + S-adenosyl-L-methionine = 5-methyluridine(341) in tmRNA + S-adenosyl-L-homocysteine + H(+)</text>
        <dbReference type="Rhea" id="RHEA:43612"/>
        <dbReference type="Rhea" id="RHEA-COMP:10630"/>
        <dbReference type="Rhea" id="RHEA-COMP:10631"/>
        <dbReference type="ChEBI" id="CHEBI:15378"/>
        <dbReference type="ChEBI" id="CHEBI:57856"/>
        <dbReference type="ChEBI" id="CHEBI:59789"/>
        <dbReference type="ChEBI" id="CHEBI:65315"/>
        <dbReference type="ChEBI" id="CHEBI:74447"/>
    </reaction>
</comment>
<comment type="similarity">
    <text evidence="1">Belongs to the class I-like SAM-binding methyltransferase superfamily. RNA M5U methyltransferase family. TrmA subfamily.</text>
</comment>
<reference key="1">
    <citation type="submission" date="2007-02" db="EMBL/GenBank/DDBJ databases">
        <title>Complete sequence of chromosome of Yersinia pestis Pestoides F.</title>
        <authorList>
            <consortium name="US DOE Joint Genome Institute"/>
            <person name="Copeland A."/>
            <person name="Lucas S."/>
            <person name="Lapidus A."/>
            <person name="Barry K."/>
            <person name="Detter J.C."/>
            <person name="Glavina del Rio T."/>
            <person name="Hammon N."/>
            <person name="Israni S."/>
            <person name="Dalin E."/>
            <person name="Tice H."/>
            <person name="Pitluck S."/>
            <person name="Di Bartolo G."/>
            <person name="Chain P."/>
            <person name="Malfatti S."/>
            <person name="Shin M."/>
            <person name="Vergez L."/>
            <person name="Schmutz J."/>
            <person name="Larimer F."/>
            <person name="Land M."/>
            <person name="Hauser L."/>
            <person name="Worsham P."/>
            <person name="Chu M."/>
            <person name="Bearden S."/>
            <person name="Garcia E."/>
            <person name="Richardson P."/>
        </authorList>
    </citation>
    <scope>NUCLEOTIDE SEQUENCE [LARGE SCALE GENOMIC DNA]</scope>
    <source>
        <strain>Pestoides F</strain>
    </source>
</reference>
<gene>
    <name evidence="1" type="primary">trmA</name>
    <name type="ordered locus">YPDSF_3523</name>
</gene>
<feature type="chain" id="PRO_1000072918" description="tRNA/tmRNA (uracil-C(5))-methyltransferase">
    <location>
        <begin position="1"/>
        <end position="367"/>
    </location>
</feature>
<feature type="active site" description="Nucleophile" evidence="1">
    <location>
        <position position="324"/>
    </location>
</feature>
<feature type="active site" description="Proton acceptor" evidence="1">
    <location>
        <position position="358"/>
    </location>
</feature>
<feature type="binding site" evidence="1">
    <location>
        <position position="190"/>
    </location>
    <ligand>
        <name>S-adenosyl-L-methionine</name>
        <dbReference type="ChEBI" id="CHEBI:59789"/>
    </ligand>
</feature>
<feature type="binding site" evidence="1">
    <location>
        <position position="218"/>
    </location>
    <ligand>
        <name>S-adenosyl-L-methionine</name>
        <dbReference type="ChEBI" id="CHEBI:59789"/>
    </ligand>
</feature>
<feature type="binding site" evidence="1">
    <location>
        <position position="223"/>
    </location>
    <ligand>
        <name>S-adenosyl-L-methionine</name>
        <dbReference type="ChEBI" id="CHEBI:59789"/>
    </ligand>
</feature>
<feature type="binding site" evidence="1">
    <location>
        <position position="239"/>
    </location>
    <ligand>
        <name>S-adenosyl-L-methionine</name>
        <dbReference type="ChEBI" id="CHEBI:59789"/>
    </ligand>
</feature>
<feature type="binding site" evidence="1">
    <location>
        <position position="299"/>
    </location>
    <ligand>
        <name>S-adenosyl-L-methionine</name>
        <dbReference type="ChEBI" id="CHEBI:59789"/>
    </ligand>
</feature>
<evidence type="ECO:0000255" key="1">
    <source>
        <dbReference type="HAMAP-Rule" id="MF_01011"/>
    </source>
</evidence>